<comment type="function">
    <text evidence="1">Cell wall formation. Catalyzes the addition of glutamate to the nucleotide precursor UDP-N-acetylmuramoyl-L-alanine (UMA).</text>
</comment>
<comment type="catalytic activity">
    <reaction>
        <text>UDP-N-acetyl-alpha-D-muramoyl-L-alanine + D-glutamate + ATP = UDP-N-acetyl-alpha-D-muramoyl-L-alanyl-D-glutamate + ADP + phosphate + H(+)</text>
        <dbReference type="Rhea" id="RHEA:16429"/>
        <dbReference type="ChEBI" id="CHEBI:15378"/>
        <dbReference type="ChEBI" id="CHEBI:29986"/>
        <dbReference type="ChEBI" id="CHEBI:30616"/>
        <dbReference type="ChEBI" id="CHEBI:43474"/>
        <dbReference type="ChEBI" id="CHEBI:83898"/>
        <dbReference type="ChEBI" id="CHEBI:83900"/>
        <dbReference type="ChEBI" id="CHEBI:456216"/>
        <dbReference type="EC" id="6.3.2.9"/>
    </reaction>
</comment>
<comment type="pathway">
    <text>Cell wall biogenesis; peptidoglycan biosynthesis.</text>
</comment>
<comment type="subcellular location">
    <subcellularLocation>
        <location evidence="1">Cytoplasm</location>
    </subcellularLocation>
</comment>
<comment type="similarity">
    <text evidence="3">Belongs to the MurCDEF family.</text>
</comment>
<feature type="chain" id="PRO_0000109099" description="UDP-N-acetylmuramoylalanine--D-glutamate ligase">
    <location>
        <begin position="1"/>
        <end position="452"/>
    </location>
</feature>
<feature type="binding site" evidence="2">
    <location>
        <begin position="119"/>
        <end position="125"/>
    </location>
    <ligand>
        <name>ATP</name>
        <dbReference type="ChEBI" id="CHEBI:30616"/>
    </ligand>
</feature>
<gene>
    <name type="primary">murD</name>
    <name type="ordered locus">SPy_1525</name>
    <name type="ordered locus">M5005_Spy1253</name>
</gene>
<proteinExistence type="inferred from homology"/>
<protein>
    <recommendedName>
        <fullName>UDP-N-acetylmuramoylalanine--D-glutamate ligase</fullName>
        <ecNumber>6.3.2.9</ecNumber>
    </recommendedName>
    <alternativeName>
        <fullName>D-glutamic acid-adding enzyme</fullName>
    </alternativeName>
    <alternativeName>
        <fullName>UDP-N-acetylmuramoyl-L-alanyl-D-glutamate synthetase</fullName>
    </alternativeName>
</protein>
<reference key="1">
    <citation type="journal article" date="2001" name="Proc. Natl. Acad. Sci. U.S.A.">
        <title>Complete genome sequence of an M1 strain of Streptococcus pyogenes.</title>
        <authorList>
            <person name="Ferretti J.J."/>
            <person name="McShan W.M."/>
            <person name="Ajdic D.J."/>
            <person name="Savic D.J."/>
            <person name="Savic G."/>
            <person name="Lyon K."/>
            <person name="Primeaux C."/>
            <person name="Sezate S."/>
            <person name="Suvorov A.N."/>
            <person name="Kenton S."/>
            <person name="Lai H.S."/>
            <person name="Lin S.P."/>
            <person name="Qian Y."/>
            <person name="Jia H.G."/>
            <person name="Najar F.Z."/>
            <person name="Ren Q."/>
            <person name="Zhu H."/>
            <person name="Song L."/>
            <person name="White J."/>
            <person name="Yuan X."/>
            <person name="Clifton S.W."/>
            <person name="Roe B.A."/>
            <person name="McLaughlin R.E."/>
        </authorList>
    </citation>
    <scope>NUCLEOTIDE SEQUENCE [LARGE SCALE GENOMIC DNA]</scope>
    <source>
        <strain>ATCC 700294 / SF370 / Serotype M1</strain>
    </source>
</reference>
<reference key="2">
    <citation type="journal article" date="2005" name="J. Infect. Dis.">
        <title>Evolutionary origin and emergence of a highly successful clone of serotype M1 group A Streptococcus involved multiple horizontal gene transfer events.</title>
        <authorList>
            <person name="Sumby P."/>
            <person name="Porcella S.F."/>
            <person name="Madrigal A.G."/>
            <person name="Barbian K.D."/>
            <person name="Virtaneva K."/>
            <person name="Ricklefs S.M."/>
            <person name="Sturdevant D.E."/>
            <person name="Graham M.R."/>
            <person name="Vuopio-Varkila J."/>
            <person name="Hoe N.P."/>
            <person name="Musser J.M."/>
        </authorList>
    </citation>
    <scope>NUCLEOTIDE SEQUENCE [LARGE SCALE GENOMIC DNA]</scope>
    <source>
        <strain>ATCC BAA-947 / MGAS5005 / Serotype M1</strain>
    </source>
</reference>
<accession>P0C0D8</accession>
<accession>O68388</accession>
<accession>P61418</accession>
<accession>Q48XQ4</accession>
<accession>Q99YV3</accession>
<accession>Q9FB03</accession>
<keyword id="KW-0067">ATP-binding</keyword>
<keyword id="KW-0131">Cell cycle</keyword>
<keyword id="KW-0132">Cell division</keyword>
<keyword id="KW-0133">Cell shape</keyword>
<keyword id="KW-0961">Cell wall biogenesis/degradation</keyword>
<keyword id="KW-0963">Cytoplasm</keyword>
<keyword id="KW-0436">Ligase</keyword>
<keyword id="KW-0547">Nucleotide-binding</keyword>
<keyword id="KW-0573">Peptidoglycan synthesis</keyword>
<keyword id="KW-1185">Reference proteome</keyword>
<sequence>MKVISNFQNKKILILGLAKSGEAAAKLLTKLGALVTVNDSKPFDQNPAAQALLEEGIKVICGSHPVELLDENFEYMVKNPGIPYDNPMVKRALAKEIPILTEVELAYFVSEAPIIGITGSNGKTTTTTMIADVLNAGGQSALLSGNIGYPASKVVQKAIAGDTLVMELSSFQLVGVNAFRPHIAVITNLMPTHLDYHGSFEDYVAAKWMIQAQMTESDYLILNANQEISATLAKTTKATVIPFSTQKVVDGAYLKDGILYFKEQAIIAATDLGVPGSHNIENALATIAVAKLSGIADDIIAQCLSHFGGVKHRLQRVGQIKDITFYNDSKSTNILATQKALSGFDNSRLILIAGGLDRGNEFDDLVPDLLGLKQMIILGESAERMKRAANKAEVSYLEARNVAEATELAFKLAQTGDTILLSPANASWDMYPNFEVRGDEFLATFDCLRGDA</sequence>
<evidence type="ECO:0000250" key="1"/>
<evidence type="ECO:0000255" key="2"/>
<evidence type="ECO:0000305" key="3"/>
<dbReference type="EC" id="6.3.2.9"/>
<dbReference type="EMBL" id="AE004092">
    <property type="protein sequence ID" value="AAK34319.1"/>
    <property type="molecule type" value="Genomic_DNA"/>
</dbReference>
<dbReference type="EMBL" id="CP000017">
    <property type="protein sequence ID" value="AAZ51871.1"/>
    <property type="molecule type" value="Genomic_DNA"/>
</dbReference>
<dbReference type="RefSeq" id="NP_269598.1">
    <property type="nucleotide sequence ID" value="NC_002737.2"/>
</dbReference>
<dbReference type="SMR" id="P0C0D8"/>
<dbReference type="PaxDb" id="1314-HKU360_01296"/>
<dbReference type="KEGG" id="spy:SPy_1525"/>
<dbReference type="KEGG" id="spz:M5005_Spy1253"/>
<dbReference type="PATRIC" id="fig|160490.10.peg.1331"/>
<dbReference type="HOGENOM" id="CLU_032540_0_1_9"/>
<dbReference type="OMA" id="CSSFDMF"/>
<dbReference type="UniPathway" id="UPA00219"/>
<dbReference type="Proteomes" id="UP000000750">
    <property type="component" value="Chromosome"/>
</dbReference>
<dbReference type="GO" id="GO:0005737">
    <property type="term" value="C:cytoplasm"/>
    <property type="evidence" value="ECO:0007669"/>
    <property type="project" value="UniProtKB-SubCell"/>
</dbReference>
<dbReference type="GO" id="GO:0005524">
    <property type="term" value="F:ATP binding"/>
    <property type="evidence" value="ECO:0007669"/>
    <property type="project" value="UniProtKB-UniRule"/>
</dbReference>
<dbReference type="GO" id="GO:0008764">
    <property type="term" value="F:UDP-N-acetylmuramoylalanine-D-glutamate ligase activity"/>
    <property type="evidence" value="ECO:0007669"/>
    <property type="project" value="UniProtKB-UniRule"/>
</dbReference>
<dbReference type="GO" id="GO:0051301">
    <property type="term" value="P:cell division"/>
    <property type="evidence" value="ECO:0007669"/>
    <property type="project" value="UniProtKB-KW"/>
</dbReference>
<dbReference type="GO" id="GO:0071555">
    <property type="term" value="P:cell wall organization"/>
    <property type="evidence" value="ECO:0007669"/>
    <property type="project" value="UniProtKB-KW"/>
</dbReference>
<dbReference type="GO" id="GO:0009252">
    <property type="term" value="P:peptidoglycan biosynthetic process"/>
    <property type="evidence" value="ECO:0007669"/>
    <property type="project" value="UniProtKB-UniRule"/>
</dbReference>
<dbReference type="GO" id="GO:0008360">
    <property type="term" value="P:regulation of cell shape"/>
    <property type="evidence" value="ECO:0007669"/>
    <property type="project" value="UniProtKB-KW"/>
</dbReference>
<dbReference type="Gene3D" id="3.90.190.20">
    <property type="entry name" value="Mur ligase, C-terminal domain"/>
    <property type="match status" value="1"/>
</dbReference>
<dbReference type="Gene3D" id="3.40.1190.10">
    <property type="entry name" value="Mur-like, catalytic domain"/>
    <property type="match status" value="1"/>
</dbReference>
<dbReference type="Gene3D" id="3.40.50.720">
    <property type="entry name" value="NAD(P)-binding Rossmann-like Domain"/>
    <property type="match status" value="1"/>
</dbReference>
<dbReference type="HAMAP" id="MF_00639">
    <property type="entry name" value="MurD"/>
    <property type="match status" value="1"/>
</dbReference>
<dbReference type="InterPro" id="IPR036565">
    <property type="entry name" value="Mur-like_cat_sf"/>
</dbReference>
<dbReference type="InterPro" id="IPR004101">
    <property type="entry name" value="Mur_ligase_C"/>
</dbReference>
<dbReference type="InterPro" id="IPR036615">
    <property type="entry name" value="Mur_ligase_C_dom_sf"/>
</dbReference>
<dbReference type="InterPro" id="IPR013221">
    <property type="entry name" value="Mur_ligase_cen"/>
</dbReference>
<dbReference type="InterPro" id="IPR005762">
    <property type="entry name" value="MurD"/>
</dbReference>
<dbReference type="NCBIfam" id="TIGR01087">
    <property type="entry name" value="murD"/>
    <property type="match status" value="1"/>
</dbReference>
<dbReference type="PANTHER" id="PTHR43692">
    <property type="entry name" value="UDP-N-ACETYLMURAMOYLALANINE--D-GLUTAMATE LIGASE"/>
    <property type="match status" value="1"/>
</dbReference>
<dbReference type="PANTHER" id="PTHR43692:SF1">
    <property type="entry name" value="UDP-N-ACETYLMURAMOYLALANINE--D-GLUTAMATE LIGASE"/>
    <property type="match status" value="1"/>
</dbReference>
<dbReference type="Pfam" id="PF02875">
    <property type="entry name" value="Mur_ligase_C"/>
    <property type="match status" value="1"/>
</dbReference>
<dbReference type="Pfam" id="PF08245">
    <property type="entry name" value="Mur_ligase_M"/>
    <property type="match status" value="1"/>
</dbReference>
<dbReference type="Pfam" id="PF21799">
    <property type="entry name" value="MurD-like_N"/>
    <property type="match status" value="1"/>
</dbReference>
<dbReference type="SUPFAM" id="SSF51984">
    <property type="entry name" value="MurCD N-terminal domain"/>
    <property type="match status" value="1"/>
</dbReference>
<dbReference type="SUPFAM" id="SSF53623">
    <property type="entry name" value="MurD-like peptide ligases, catalytic domain"/>
    <property type="match status" value="1"/>
</dbReference>
<dbReference type="SUPFAM" id="SSF53244">
    <property type="entry name" value="MurD-like peptide ligases, peptide-binding domain"/>
    <property type="match status" value="1"/>
</dbReference>
<name>MURD_STRP1</name>
<organism>
    <name type="scientific">Streptococcus pyogenes serotype M1</name>
    <dbReference type="NCBI Taxonomy" id="301447"/>
    <lineage>
        <taxon>Bacteria</taxon>
        <taxon>Bacillati</taxon>
        <taxon>Bacillota</taxon>
        <taxon>Bacilli</taxon>
        <taxon>Lactobacillales</taxon>
        <taxon>Streptococcaceae</taxon>
        <taxon>Streptococcus</taxon>
    </lineage>
</organism>